<gene>
    <name evidence="1" type="primary">rplW</name>
    <name type="ordered locus">Mjls_1042</name>
</gene>
<protein>
    <recommendedName>
        <fullName evidence="1">Large ribosomal subunit protein uL23</fullName>
    </recommendedName>
    <alternativeName>
        <fullName evidence="2">50S ribosomal protein L23</fullName>
    </alternativeName>
</protein>
<organism>
    <name type="scientific">Mycobacterium sp. (strain JLS)</name>
    <dbReference type="NCBI Taxonomy" id="164757"/>
    <lineage>
        <taxon>Bacteria</taxon>
        <taxon>Bacillati</taxon>
        <taxon>Actinomycetota</taxon>
        <taxon>Actinomycetes</taxon>
        <taxon>Mycobacteriales</taxon>
        <taxon>Mycobacteriaceae</taxon>
        <taxon>Mycobacterium</taxon>
    </lineage>
</organism>
<sequence>MATVTDPRDIILAPVISEKSYGLIEDNVYTFIVHPDSNKTQIKIAIEKIFKVKVDSVNTANRQGKRKRTRSGFGQRKSTKRAIVTLAAGSKPIDLFGAPA</sequence>
<dbReference type="EMBL" id="CP000580">
    <property type="protein sequence ID" value="ABN96850.1"/>
    <property type="molecule type" value="Genomic_DNA"/>
</dbReference>
<dbReference type="SMR" id="A3PVC3"/>
<dbReference type="KEGG" id="mjl:Mjls_1042"/>
<dbReference type="HOGENOM" id="CLU_037562_3_2_11"/>
<dbReference type="BioCyc" id="MSP164757:G1G8C-1055-MONOMER"/>
<dbReference type="GO" id="GO:1990904">
    <property type="term" value="C:ribonucleoprotein complex"/>
    <property type="evidence" value="ECO:0007669"/>
    <property type="project" value="UniProtKB-KW"/>
</dbReference>
<dbReference type="GO" id="GO:0005840">
    <property type="term" value="C:ribosome"/>
    <property type="evidence" value="ECO:0007669"/>
    <property type="project" value="UniProtKB-KW"/>
</dbReference>
<dbReference type="GO" id="GO:0019843">
    <property type="term" value="F:rRNA binding"/>
    <property type="evidence" value="ECO:0007669"/>
    <property type="project" value="UniProtKB-UniRule"/>
</dbReference>
<dbReference type="GO" id="GO:0003735">
    <property type="term" value="F:structural constituent of ribosome"/>
    <property type="evidence" value="ECO:0007669"/>
    <property type="project" value="InterPro"/>
</dbReference>
<dbReference type="GO" id="GO:0006412">
    <property type="term" value="P:translation"/>
    <property type="evidence" value="ECO:0007669"/>
    <property type="project" value="UniProtKB-UniRule"/>
</dbReference>
<dbReference type="FunFam" id="3.30.70.330:FF:000001">
    <property type="entry name" value="50S ribosomal protein L23"/>
    <property type="match status" value="1"/>
</dbReference>
<dbReference type="Gene3D" id="3.30.70.330">
    <property type="match status" value="1"/>
</dbReference>
<dbReference type="HAMAP" id="MF_01369_B">
    <property type="entry name" value="Ribosomal_uL23_B"/>
    <property type="match status" value="1"/>
</dbReference>
<dbReference type="InterPro" id="IPR012677">
    <property type="entry name" value="Nucleotide-bd_a/b_plait_sf"/>
</dbReference>
<dbReference type="InterPro" id="IPR013025">
    <property type="entry name" value="Ribosomal_uL23-like"/>
</dbReference>
<dbReference type="InterPro" id="IPR012678">
    <property type="entry name" value="Ribosomal_uL23/eL15/eS24_sf"/>
</dbReference>
<dbReference type="InterPro" id="IPR001014">
    <property type="entry name" value="Ribosomal_uL23_CS"/>
</dbReference>
<dbReference type="NCBIfam" id="NF004363">
    <property type="entry name" value="PRK05738.2-4"/>
    <property type="match status" value="1"/>
</dbReference>
<dbReference type="NCBIfam" id="NF004364">
    <property type="entry name" value="PRK05738.2-5"/>
    <property type="match status" value="1"/>
</dbReference>
<dbReference type="PANTHER" id="PTHR11620">
    <property type="entry name" value="60S RIBOSOMAL PROTEIN L23A"/>
    <property type="match status" value="1"/>
</dbReference>
<dbReference type="Pfam" id="PF00276">
    <property type="entry name" value="Ribosomal_L23"/>
    <property type="match status" value="1"/>
</dbReference>
<dbReference type="SUPFAM" id="SSF54189">
    <property type="entry name" value="Ribosomal proteins S24e, L23 and L15e"/>
    <property type="match status" value="1"/>
</dbReference>
<dbReference type="PROSITE" id="PS00050">
    <property type="entry name" value="RIBOSOMAL_L23"/>
    <property type="match status" value="1"/>
</dbReference>
<comment type="function">
    <text evidence="1">One of the early assembly proteins it binds 23S rRNA. One of the proteins that surrounds the polypeptide exit tunnel on the outside of the ribosome. Forms the main docking site for trigger factor binding to the ribosome.</text>
</comment>
<comment type="subunit">
    <text evidence="1">Part of the 50S ribosomal subunit. Contacts protein L29, and trigger factor when it is bound to the ribosome.</text>
</comment>
<comment type="similarity">
    <text evidence="1">Belongs to the universal ribosomal protein uL23 family.</text>
</comment>
<evidence type="ECO:0000255" key="1">
    <source>
        <dbReference type="HAMAP-Rule" id="MF_01369"/>
    </source>
</evidence>
<evidence type="ECO:0000305" key="2"/>
<proteinExistence type="inferred from homology"/>
<feature type="chain" id="PRO_1000068114" description="Large ribosomal subunit protein uL23">
    <location>
        <begin position="1"/>
        <end position="100"/>
    </location>
</feature>
<accession>A3PVC3</accession>
<name>RL23_MYCSJ</name>
<reference key="1">
    <citation type="submission" date="2007-02" db="EMBL/GenBank/DDBJ databases">
        <title>Complete sequence of Mycobacterium sp. JLS.</title>
        <authorList>
            <consortium name="US DOE Joint Genome Institute"/>
            <person name="Copeland A."/>
            <person name="Lucas S."/>
            <person name="Lapidus A."/>
            <person name="Barry K."/>
            <person name="Detter J.C."/>
            <person name="Glavina del Rio T."/>
            <person name="Hammon N."/>
            <person name="Israni S."/>
            <person name="Dalin E."/>
            <person name="Tice H."/>
            <person name="Pitluck S."/>
            <person name="Chain P."/>
            <person name="Malfatti S."/>
            <person name="Shin M."/>
            <person name="Vergez L."/>
            <person name="Schmutz J."/>
            <person name="Larimer F."/>
            <person name="Land M."/>
            <person name="Hauser L."/>
            <person name="Kyrpides N."/>
            <person name="Mikhailova N."/>
            <person name="Miller C.D."/>
            <person name="Anderson A.J."/>
            <person name="Sims R.C."/>
            <person name="Richardson P."/>
        </authorList>
    </citation>
    <scope>NUCLEOTIDE SEQUENCE [LARGE SCALE GENOMIC DNA]</scope>
    <source>
        <strain>JLS</strain>
    </source>
</reference>
<keyword id="KW-0687">Ribonucleoprotein</keyword>
<keyword id="KW-0689">Ribosomal protein</keyword>
<keyword id="KW-0694">RNA-binding</keyword>
<keyword id="KW-0699">rRNA-binding</keyword>